<name>PSD_VIBC1</name>
<gene>
    <name evidence="1" type="primary">psd</name>
    <name type="ordered locus">VIBHAR_00114</name>
</gene>
<dbReference type="EC" id="4.1.1.65" evidence="1"/>
<dbReference type="EMBL" id="CP000789">
    <property type="protein sequence ID" value="ABU69162.1"/>
    <property type="molecule type" value="Genomic_DNA"/>
</dbReference>
<dbReference type="SMR" id="A7MZ50"/>
<dbReference type="KEGG" id="vha:VIBHAR_00114"/>
<dbReference type="PATRIC" id="fig|338187.25.peg.2419"/>
<dbReference type="UniPathway" id="UPA00558">
    <property type="reaction ID" value="UER00616"/>
</dbReference>
<dbReference type="Proteomes" id="UP000008152">
    <property type="component" value="Chromosome I"/>
</dbReference>
<dbReference type="GO" id="GO:0005886">
    <property type="term" value="C:plasma membrane"/>
    <property type="evidence" value="ECO:0007669"/>
    <property type="project" value="UniProtKB-SubCell"/>
</dbReference>
<dbReference type="GO" id="GO:0004609">
    <property type="term" value="F:phosphatidylserine decarboxylase activity"/>
    <property type="evidence" value="ECO:0007669"/>
    <property type="project" value="UniProtKB-UniRule"/>
</dbReference>
<dbReference type="GO" id="GO:0006646">
    <property type="term" value="P:phosphatidylethanolamine biosynthetic process"/>
    <property type="evidence" value="ECO:0007669"/>
    <property type="project" value="UniProtKB-UniRule"/>
</dbReference>
<dbReference type="HAMAP" id="MF_00662">
    <property type="entry name" value="PS_decarb_PSD_B_type1"/>
    <property type="match status" value="1"/>
</dbReference>
<dbReference type="InterPro" id="IPR003817">
    <property type="entry name" value="PS_Dcarbxylase"/>
</dbReference>
<dbReference type="InterPro" id="IPR033177">
    <property type="entry name" value="PSD-B"/>
</dbReference>
<dbReference type="InterPro" id="IPR033178">
    <property type="entry name" value="PSD_type1_pro"/>
</dbReference>
<dbReference type="NCBIfam" id="TIGR00163">
    <property type="entry name" value="PS_decarb"/>
    <property type="match status" value="1"/>
</dbReference>
<dbReference type="PANTHER" id="PTHR10067">
    <property type="entry name" value="PHOSPHATIDYLSERINE DECARBOXYLASE"/>
    <property type="match status" value="1"/>
</dbReference>
<dbReference type="PANTHER" id="PTHR10067:SF6">
    <property type="entry name" value="PHOSPHATIDYLSERINE DECARBOXYLASE PROENZYME, MITOCHONDRIAL"/>
    <property type="match status" value="1"/>
</dbReference>
<dbReference type="Pfam" id="PF02666">
    <property type="entry name" value="PS_Dcarbxylase"/>
    <property type="match status" value="1"/>
</dbReference>
<protein>
    <recommendedName>
        <fullName evidence="1">Phosphatidylserine decarboxylase proenzyme</fullName>
        <ecNumber evidence="1">4.1.1.65</ecNumber>
    </recommendedName>
    <component>
        <recommendedName>
            <fullName evidence="1">Phosphatidylserine decarboxylase alpha chain</fullName>
        </recommendedName>
    </component>
    <component>
        <recommendedName>
            <fullName evidence="1">Phosphatidylserine decarboxylase beta chain</fullName>
        </recommendedName>
    </component>
</protein>
<accession>A7MZ50</accession>
<comment type="function">
    <text evidence="1">Catalyzes the formation of phosphatidylethanolamine (PtdEtn) from phosphatidylserine (PtdSer).</text>
</comment>
<comment type="catalytic activity">
    <reaction evidence="1">
        <text>a 1,2-diacyl-sn-glycero-3-phospho-L-serine + H(+) = a 1,2-diacyl-sn-glycero-3-phosphoethanolamine + CO2</text>
        <dbReference type="Rhea" id="RHEA:20828"/>
        <dbReference type="ChEBI" id="CHEBI:15378"/>
        <dbReference type="ChEBI" id="CHEBI:16526"/>
        <dbReference type="ChEBI" id="CHEBI:57262"/>
        <dbReference type="ChEBI" id="CHEBI:64612"/>
        <dbReference type="EC" id="4.1.1.65"/>
    </reaction>
</comment>
<comment type="cofactor">
    <cofactor evidence="1">
        <name>pyruvate</name>
        <dbReference type="ChEBI" id="CHEBI:15361"/>
    </cofactor>
    <text evidence="1">Binds 1 pyruvoyl group covalently per subunit.</text>
</comment>
<comment type="pathway">
    <text evidence="1">Phospholipid metabolism; phosphatidylethanolamine biosynthesis; phosphatidylethanolamine from CDP-diacylglycerol: step 2/2.</text>
</comment>
<comment type="subunit">
    <text evidence="1">Heterodimer of a large membrane-associated beta subunit and a small pyruvoyl-containing alpha subunit.</text>
</comment>
<comment type="subcellular location">
    <subcellularLocation>
        <location evidence="1">Cell membrane</location>
        <topology evidence="1">Peripheral membrane protein</topology>
    </subcellularLocation>
</comment>
<comment type="PTM">
    <text evidence="1">Is synthesized initially as an inactive proenzyme. Formation of the active enzyme involves a self-maturation process in which the active site pyruvoyl group is generated from an internal serine residue via an autocatalytic post-translational modification. Two non-identical subunits are generated from the proenzyme in this reaction, and the pyruvate is formed at the N-terminus of the alpha chain, which is derived from the carboxyl end of the proenzyme. The autoendoproteolytic cleavage occurs by a canonical serine protease mechanism, in which the side chain hydroxyl group of the serine supplies its oxygen atom to form the C-terminus of the beta chain, while the remainder of the serine residue undergoes an oxidative deamination to produce ammonia and the pyruvoyl prosthetic group on the alpha chain. During this reaction, the Ser that is part of the protease active site of the proenzyme becomes the pyruvoyl prosthetic group, which constitutes an essential element of the active site of the mature decarboxylase.</text>
</comment>
<comment type="similarity">
    <text evidence="1">Belongs to the phosphatidylserine decarboxylase family. PSD-B subfamily. Prokaryotic type I sub-subfamily.</text>
</comment>
<organism>
    <name type="scientific">Vibrio campbellii (strain ATCC BAA-1116)</name>
    <dbReference type="NCBI Taxonomy" id="2902295"/>
    <lineage>
        <taxon>Bacteria</taxon>
        <taxon>Pseudomonadati</taxon>
        <taxon>Pseudomonadota</taxon>
        <taxon>Gammaproteobacteria</taxon>
        <taxon>Vibrionales</taxon>
        <taxon>Vibrionaceae</taxon>
        <taxon>Vibrio</taxon>
    </lineage>
</organism>
<feature type="chain" id="PRO_1000026596" description="Phosphatidylserine decarboxylase beta chain" evidence="1">
    <location>
        <begin position="1"/>
        <end position="251"/>
    </location>
</feature>
<feature type="chain" id="PRO_1000026597" description="Phosphatidylserine decarboxylase alpha chain" evidence="1">
    <location>
        <begin position="252"/>
        <end position="285"/>
    </location>
</feature>
<feature type="active site" description="Charge relay system; for autoendoproteolytic cleavage activity" evidence="1">
    <location>
        <position position="89"/>
    </location>
</feature>
<feature type="active site" description="Charge relay system; for autoendoproteolytic cleavage activity" evidence="1">
    <location>
        <position position="146"/>
    </location>
</feature>
<feature type="active site" description="Charge relay system; for autoendoproteolytic cleavage activity" evidence="1">
    <location>
        <position position="252"/>
    </location>
</feature>
<feature type="active site" description="Schiff-base intermediate with substrate; via pyruvic acid; for decarboxylase activity" evidence="1">
    <location>
        <position position="252"/>
    </location>
</feature>
<feature type="site" description="Cleavage (non-hydrolytic); by autocatalysis" evidence="1">
    <location>
        <begin position="251"/>
        <end position="252"/>
    </location>
</feature>
<feature type="modified residue" description="Pyruvic acid (Ser); by autocatalysis" evidence="1">
    <location>
        <position position="252"/>
    </location>
</feature>
<proteinExistence type="inferred from homology"/>
<reference key="1">
    <citation type="submission" date="2007-08" db="EMBL/GenBank/DDBJ databases">
        <authorList>
            <consortium name="The Vibrio harveyi Genome Sequencing Project"/>
            <person name="Bassler B."/>
            <person name="Clifton S.W."/>
            <person name="Fulton L."/>
            <person name="Delehaunty K."/>
            <person name="Fronick C."/>
            <person name="Harrison M."/>
            <person name="Markivic C."/>
            <person name="Fulton R."/>
            <person name="Tin-Wollam A.-M."/>
            <person name="Shah N."/>
            <person name="Pepin K."/>
            <person name="Nash W."/>
            <person name="Thiruvilangam P."/>
            <person name="Bhonagiri V."/>
            <person name="Waters C."/>
            <person name="Tu K.C."/>
            <person name="Irgon J."/>
            <person name="Wilson R.K."/>
        </authorList>
    </citation>
    <scope>NUCLEOTIDE SEQUENCE [LARGE SCALE GENOMIC DNA]</scope>
    <source>
        <strain>ATCC BAA-1116 / BB120</strain>
    </source>
</reference>
<keyword id="KW-1003">Cell membrane</keyword>
<keyword id="KW-0210">Decarboxylase</keyword>
<keyword id="KW-0444">Lipid biosynthesis</keyword>
<keyword id="KW-0443">Lipid metabolism</keyword>
<keyword id="KW-0456">Lyase</keyword>
<keyword id="KW-0472">Membrane</keyword>
<keyword id="KW-0594">Phospholipid biosynthesis</keyword>
<keyword id="KW-1208">Phospholipid metabolism</keyword>
<keyword id="KW-0670">Pyruvate</keyword>
<keyword id="KW-0865">Zymogen</keyword>
<evidence type="ECO:0000255" key="1">
    <source>
        <dbReference type="HAMAP-Rule" id="MF_00662"/>
    </source>
</evidence>
<sequence>MDKIKVGLQYWIPQHGLTRLVGKLASAEAGGLTTAVIRWFIKQYNVNMDEAKHSDPKHFKTFNEFFVRELKDGARPIAEGDAVITHPADACVSQFGPIEDGQLIQAKGHNFSAQELLGGDAKLAEEFQDGSFATLYLSPRDYHRVHMPCDGTLRQMIYVPGDLFSVNPLTAENVPNLFARNERVVCIFDTEFGPMAQVLVGATIVGSIEQVWAGTITPPRGNSVYKWDYPAEGDKAVILKKGEEMGRFKLGSTVINLFVKNAIAFDESMENGKPTVMGTPYAHQQ</sequence>